<organism>
    <name type="scientific">Bifidobacterium longum (strain NCC 2705)</name>
    <dbReference type="NCBI Taxonomy" id="206672"/>
    <lineage>
        <taxon>Bacteria</taxon>
        <taxon>Bacillati</taxon>
        <taxon>Actinomycetota</taxon>
        <taxon>Actinomycetes</taxon>
        <taxon>Bifidobacteriales</taxon>
        <taxon>Bifidobacteriaceae</taxon>
        <taxon>Bifidobacterium</taxon>
    </lineage>
</organism>
<keyword id="KW-0342">GTP-binding</keyword>
<keyword id="KW-0547">Nucleotide-binding</keyword>
<keyword id="KW-1185">Reference proteome</keyword>
<keyword id="KW-0677">Repeat</keyword>
<keyword id="KW-0690">Ribosome biogenesis</keyword>
<dbReference type="EMBL" id="AE014295">
    <property type="protein sequence ID" value="AAN24555.1"/>
    <property type="molecule type" value="Genomic_DNA"/>
</dbReference>
<dbReference type="SMR" id="Q8G6A8"/>
<dbReference type="STRING" id="206672.BL0738"/>
<dbReference type="EnsemblBacteria" id="AAN24555">
    <property type="protein sequence ID" value="AAN24555"/>
    <property type="gene ID" value="BL0738"/>
</dbReference>
<dbReference type="KEGG" id="blo:BL0738"/>
<dbReference type="HOGENOM" id="CLU_016077_6_2_11"/>
<dbReference type="Proteomes" id="UP000000439">
    <property type="component" value="Chromosome"/>
</dbReference>
<dbReference type="GO" id="GO:0016887">
    <property type="term" value="F:ATP hydrolysis activity"/>
    <property type="evidence" value="ECO:0007669"/>
    <property type="project" value="InterPro"/>
</dbReference>
<dbReference type="GO" id="GO:0005525">
    <property type="term" value="F:GTP binding"/>
    <property type="evidence" value="ECO:0007669"/>
    <property type="project" value="UniProtKB-UniRule"/>
</dbReference>
<dbReference type="GO" id="GO:0043022">
    <property type="term" value="F:ribosome binding"/>
    <property type="evidence" value="ECO:0007669"/>
    <property type="project" value="TreeGrafter"/>
</dbReference>
<dbReference type="GO" id="GO:0042254">
    <property type="term" value="P:ribosome biogenesis"/>
    <property type="evidence" value="ECO:0007669"/>
    <property type="project" value="UniProtKB-KW"/>
</dbReference>
<dbReference type="CDD" id="cd01894">
    <property type="entry name" value="EngA1"/>
    <property type="match status" value="1"/>
</dbReference>
<dbReference type="CDD" id="cd01895">
    <property type="entry name" value="EngA2"/>
    <property type="match status" value="1"/>
</dbReference>
<dbReference type="FunFam" id="3.30.300.20:FF:000004">
    <property type="entry name" value="GTPase Der"/>
    <property type="match status" value="1"/>
</dbReference>
<dbReference type="FunFam" id="3.40.50.300:FF:000057">
    <property type="entry name" value="GTPase Der"/>
    <property type="match status" value="1"/>
</dbReference>
<dbReference type="Gene3D" id="3.30.300.20">
    <property type="match status" value="1"/>
</dbReference>
<dbReference type="Gene3D" id="3.40.50.300">
    <property type="entry name" value="P-loop containing nucleotide triphosphate hydrolases"/>
    <property type="match status" value="2"/>
</dbReference>
<dbReference type="HAMAP" id="MF_00195">
    <property type="entry name" value="GTPase_Der"/>
    <property type="match status" value="1"/>
</dbReference>
<dbReference type="InterPro" id="IPR003593">
    <property type="entry name" value="AAA+_ATPase"/>
</dbReference>
<dbReference type="InterPro" id="IPR031166">
    <property type="entry name" value="G_ENGA"/>
</dbReference>
<dbReference type="InterPro" id="IPR006073">
    <property type="entry name" value="GTP-bd"/>
</dbReference>
<dbReference type="InterPro" id="IPR016484">
    <property type="entry name" value="GTPase_Der"/>
</dbReference>
<dbReference type="InterPro" id="IPR032859">
    <property type="entry name" value="KH_dom-like"/>
</dbReference>
<dbReference type="InterPro" id="IPR015946">
    <property type="entry name" value="KH_dom-like_a/b"/>
</dbReference>
<dbReference type="InterPro" id="IPR027417">
    <property type="entry name" value="P-loop_NTPase"/>
</dbReference>
<dbReference type="InterPro" id="IPR005225">
    <property type="entry name" value="Small_GTP-bd"/>
</dbReference>
<dbReference type="NCBIfam" id="TIGR03594">
    <property type="entry name" value="GTPase_EngA"/>
    <property type="match status" value="1"/>
</dbReference>
<dbReference type="NCBIfam" id="NF002828">
    <property type="entry name" value="PRK03003.1"/>
    <property type="match status" value="1"/>
</dbReference>
<dbReference type="NCBIfam" id="TIGR00231">
    <property type="entry name" value="small_GTP"/>
    <property type="match status" value="2"/>
</dbReference>
<dbReference type="PANTHER" id="PTHR43834">
    <property type="entry name" value="GTPASE DER"/>
    <property type="match status" value="1"/>
</dbReference>
<dbReference type="PANTHER" id="PTHR43834:SF6">
    <property type="entry name" value="GTPASE DER"/>
    <property type="match status" value="1"/>
</dbReference>
<dbReference type="Pfam" id="PF14714">
    <property type="entry name" value="KH_dom-like"/>
    <property type="match status" value="1"/>
</dbReference>
<dbReference type="Pfam" id="PF01926">
    <property type="entry name" value="MMR_HSR1"/>
    <property type="match status" value="2"/>
</dbReference>
<dbReference type="PIRSF" id="PIRSF006485">
    <property type="entry name" value="GTP-binding_EngA"/>
    <property type="match status" value="1"/>
</dbReference>
<dbReference type="PRINTS" id="PR00326">
    <property type="entry name" value="GTP1OBG"/>
</dbReference>
<dbReference type="SMART" id="SM00382">
    <property type="entry name" value="AAA"/>
    <property type="match status" value="2"/>
</dbReference>
<dbReference type="SUPFAM" id="SSF52540">
    <property type="entry name" value="P-loop containing nucleoside triphosphate hydrolases"/>
    <property type="match status" value="2"/>
</dbReference>
<dbReference type="PROSITE" id="PS51712">
    <property type="entry name" value="G_ENGA"/>
    <property type="match status" value="2"/>
</dbReference>
<evidence type="ECO:0000255" key="1">
    <source>
        <dbReference type="HAMAP-Rule" id="MF_00195"/>
    </source>
</evidence>
<evidence type="ECO:0000256" key="2">
    <source>
        <dbReference type="SAM" id="MobiDB-lite"/>
    </source>
</evidence>
<proteinExistence type="inferred from homology"/>
<sequence length="463" mass="51186">MDEGDEDLISGRGFTEGARKAGPKPVGVLAVVGRPNVGKSSLVNRILGRRAAVVEDTPGVTRDRVSYDAEWAGTDFKLVDTGGWEADVEGIESAIASQAQVAVTLADAVVFVVDGQVGMTTTDERIVKMLRAAGKPVVLAVNKIDDQASEYLAAEFWKLGLGEPYSISAMHGRGVGDLLDVALDKLKQAEKTSGYLTPSGLRRVALVGRPNVGKSSLLNQLAREERAVVNDLAGTTRDPVDEIVNIDGEDWLFIDTAGIKRRQHKLTGAEYYSSLRTQAAIERCELALILFDASQPVSDQDLKVMSTAVDAGRAIVLVFNKWDAMDEFDKQRLERLWNTEFDRVMWAERVNLSAKTGWHTNRLTRAMDKALESWDQRIPTGKLNAFLGKIQAAHPHPLRGGKQPRILFATQASTRPPRFVIFATGFLEHGYRRYIERSLREEFGFEGTPIQISVNIREKKKRK</sequence>
<comment type="function">
    <text evidence="1">GTPase that plays an essential role in the late steps of ribosome biogenesis.</text>
</comment>
<comment type="subunit">
    <text evidence="1">Associates with the 50S ribosomal subunit.</text>
</comment>
<comment type="similarity">
    <text evidence="1">Belongs to the TRAFAC class TrmE-Era-EngA-EngB-Septin-like GTPase superfamily. EngA (Der) GTPase family.</text>
</comment>
<name>DER_BIFLO</name>
<reference key="1">
    <citation type="journal article" date="2002" name="Proc. Natl. Acad. Sci. U.S.A.">
        <title>The genome sequence of Bifidobacterium longum reflects its adaptation to the human gastrointestinal tract.</title>
        <authorList>
            <person name="Schell M.A."/>
            <person name="Karmirantzou M."/>
            <person name="Snel B."/>
            <person name="Vilanova D."/>
            <person name="Berger B."/>
            <person name="Pessi G."/>
            <person name="Zwahlen M.-C."/>
            <person name="Desiere F."/>
            <person name="Bork P."/>
            <person name="Delley M."/>
            <person name="Pridmore R.D."/>
            <person name="Arigoni F."/>
        </authorList>
    </citation>
    <scope>NUCLEOTIDE SEQUENCE [LARGE SCALE GENOMIC DNA]</scope>
    <source>
        <strain>NCC 2705</strain>
    </source>
</reference>
<protein>
    <recommendedName>
        <fullName evidence="1">GTPase Der</fullName>
    </recommendedName>
    <alternativeName>
        <fullName evidence="1">GTP-binding protein EngA</fullName>
    </alternativeName>
</protein>
<gene>
    <name evidence="1" type="primary">der</name>
    <name type="synonym">engA</name>
    <name type="ordered locus">BL0738</name>
</gene>
<feature type="chain" id="PRO_0000178966" description="GTPase Der">
    <location>
        <begin position="1"/>
        <end position="463"/>
    </location>
</feature>
<feature type="domain" description="EngA-type G 1">
    <location>
        <begin position="27"/>
        <end position="190"/>
    </location>
</feature>
<feature type="domain" description="EngA-type G 2">
    <location>
        <begin position="202"/>
        <end position="375"/>
    </location>
</feature>
<feature type="domain" description="KH-like" evidence="1">
    <location>
        <begin position="376"/>
        <end position="458"/>
    </location>
</feature>
<feature type="region of interest" description="Disordered" evidence="2">
    <location>
        <begin position="1"/>
        <end position="20"/>
    </location>
</feature>
<feature type="binding site" evidence="1">
    <location>
        <begin position="33"/>
        <end position="40"/>
    </location>
    <ligand>
        <name>GTP</name>
        <dbReference type="ChEBI" id="CHEBI:37565"/>
        <label>1</label>
    </ligand>
</feature>
<feature type="binding site" evidence="1">
    <location>
        <begin position="80"/>
        <end position="84"/>
    </location>
    <ligand>
        <name>GTP</name>
        <dbReference type="ChEBI" id="CHEBI:37565"/>
        <label>1</label>
    </ligand>
</feature>
<feature type="binding site" evidence="1">
    <location>
        <begin position="142"/>
        <end position="145"/>
    </location>
    <ligand>
        <name>GTP</name>
        <dbReference type="ChEBI" id="CHEBI:37565"/>
        <label>1</label>
    </ligand>
</feature>
<feature type="binding site" evidence="1">
    <location>
        <begin position="208"/>
        <end position="215"/>
    </location>
    <ligand>
        <name>GTP</name>
        <dbReference type="ChEBI" id="CHEBI:37565"/>
        <label>2</label>
    </ligand>
</feature>
<feature type="binding site" evidence="1">
    <location>
        <begin position="255"/>
        <end position="259"/>
    </location>
    <ligand>
        <name>GTP</name>
        <dbReference type="ChEBI" id="CHEBI:37565"/>
        <label>2</label>
    </ligand>
</feature>
<feature type="binding site" evidence="1">
    <location>
        <begin position="320"/>
        <end position="323"/>
    </location>
    <ligand>
        <name>GTP</name>
        <dbReference type="ChEBI" id="CHEBI:37565"/>
        <label>2</label>
    </ligand>
</feature>
<accession>Q8G6A8</accession>